<organism>
    <name type="scientific">Salmonella newport (strain SL254)</name>
    <dbReference type="NCBI Taxonomy" id="423368"/>
    <lineage>
        <taxon>Bacteria</taxon>
        <taxon>Pseudomonadati</taxon>
        <taxon>Pseudomonadota</taxon>
        <taxon>Gammaproteobacteria</taxon>
        <taxon>Enterobacterales</taxon>
        <taxon>Enterobacteriaceae</taxon>
        <taxon>Salmonella</taxon>
    </lineage>
</organism>
<gene>
    <name evidence="1" type="primary">dapF</name>
    <name type="ordered locus">SNSL254_A4227</name>
</gene>
<accession>B4SZ51</accession>
<name>DAPF_SALNS</name>
<proteinExistence type="inferred from homology"/>
<comment type="function">
    <text evidence="1">Catalyzes the stereoinversion of LL-2,6-diaminopimelate (L,L-DAP) to meso-diaminopimelate (meso-DAP), a precursor of L-lysine and an essential component of the bacterial peptidoglycan.</text>
</comment>
<comment type="catalytic activity">
    <reaction evidence="1">
        <text>(2S,6S)-2,6-diaminopimelate = meso-2,6-diaminopimelate</text>
        <dbReference type="Rhea" id="RHEA:15393"/>
        <dbReference type="ChEBI" id="CHEBI:57609"/>
        <dbReference type="ChEBI" id="CHEBI:57791"/>
        <dbReference type="EC" id="5.1.1.7"/>
    </reaction>
</comment>
<comment type="pathway">
    <text evidence="1">Amino-acid biosynthesis; L-lysine biosynthesis via DAP pathway; DL-2,6-diaminopimelate from LL-2,6-diaminopimelate: step 1/1.</text>
</comment>
<comment type="subunit">
    <text evidence="1">Homodimer.</text>
</comment>
<comment type="subcellular location">
    <subcellularLocation>
        <location evidence="1">Cytoplasm</location>
    </subcellularLocation>
</comment>
<comment type="similarity">
    <text evidence="1">Belongs to the diaminopimelate epimerase family.</text>
</comment>
<protein>
    <recommendedName>
        <fullName evidence="1">Diaminopimelate epimerase</fullName>
        <shortName evidence="1">DAP epimerase</shortName>
        <ecNumber evidence="1">5.1.1.7</ecNumber>
    </recommendedName>
    <alternativeName>
        <fullName evidence="1">PLP-independent amino acid racemase</fullName>
    </alternativeName>
</protein>
<reference key="1">
    <citation type="journal article" date="2011" name="J. Bacteriol.">
        <title>Comparative genomics of 28 Salmonella enterica isolates: evidence for CRISPR-mediated adaptive sublineage evolution.</title>
        <authorList>
            <person name="Fricke W.F."/>
            <person name="Mammel M.K."/>
            <person name="McDermott P.F."/>
            <person name="Tartera C."/>
            <person name="White D.G."/>
            <person name="Leclerc J.E."/>
            <person name="Ravel J."/>
            <person name="Cebula T.A."/>
        </authorList>
    </citation>
    <scope>NUCLEOTIDE SEQUENCE [LARGE SCALE GENOMIC DNA]</scope>
    <source>
        <strain>SL254</strain>
    </source>
</reference>
<keyword id="KW-0028">Amino-acid biosynthesis</keyword>
<keyword id="KW-0963">Cytoplasm</keyword>
<keyword id="KW-0413">Isomerase</keyword>
<keyword id="KW-0457">Lysine biosynthesis</keyword>
<dbReference type="EC" id="5.1.1.7" evidence="1"/>
<dbReference type="EMBL" id="CP001113">
    <property type="protein sequence ID" value="ACF62178.1"/>
    <property type="molecule type" value="Genomic_DNA"/>
</dbReference>
<dbReference type="RefSeq" id="WP_001160671.1">
    <property type="nucleotide sequence ID" value="NZ_CCMR01000001.1"/>
</dbReference>
<dbReference type="SMR" id="B4SZ51"/>
<dbReference type="KEGG" id="see:SNSL254_A4227"/>
<dbReference type="HOGENOM" id="CLU_053306_1_1_6"/>
<dbReference type="UniPathway" id="UPA00034">
    <property type="reaction ID" value="UER00025"/>
</dbReference>
<dbReference type="Proteomes" id="UP000008824">
    <property type="component" value="Chromosome"/>
</dbReference>
<dbReference type="GO" id="GO:0005829">
    <property type="term" value="C:cytosol"/>
    <property type="evidence" value="ECO:0007669"/>
    <property type="project" value="TreeGrafter"/>
</dbReference>
<dbReference type="GO" id="GO:0008837">
    <property type="term" value="F:diaminopimelate epimerase activity"/>
    <property type="evidence" value="ECO:0007669"/>
    <property type="project" value="UniProtKB-UniRule"/>
</dbReference>
<dbReference type="GO" id="GO:0009089">
    <property type="term" value="P:lysine biosynthetic process via diaminopimelate"/>
    <property type="evidence" value="ECO:0007669"/>
    <property type="project" value="UniProtKB-UniRule"/>
</dbReference>
<dbReference type="FunFam" id="3.10.310.10:FF:000001">
    <property type="entry name" value="Diaminopimelate epimerase"/>
    <property type="match status" value="1"/>
</dbReference>
<dbReference type="FunFam" id="3.10.310.10:FF:000002">
    <property type="entry name" value="Diaminopimelate epimerase"/>
    <property type="match status" value="1"/>
</dbReference>
<dbReference type="Gene3D" id="3.10.310.10">
    <property type="entry name" value="Diaminopimelate Epimerase, Chain A, domain 1"/>
    <property type="match status" value="2"/>
</dbReference>
<dbReference type="HAMAP" id="MF_00197">
    <property type="entry name" value="DAP_epimerase"/>
    <property type="match status" value="1"/>
</dbReference>
<dbReference type="InterPro" id="IPR018510">
    <property type="entry name" value="DAP_epimerase_AS"/>
</dbReference>
<dbReference type="InterPro" id="IPR001653">
    <property type="entry name" value="DAP_epimerase_DapF"/>
</dbReference>
<dbReference type="NCBIfam" id="TIGR00652">
    <property type="entry name" value="DapF"/>
    <property type="match status" value="1"/>
</dbReference>
<dbReference type="PANTHER" id="PTHR31689:SF0">
    <property type="entry name" value="DIAMINOPIMELATE EPIMERASE"/>
    <property type="match status" value="1"/>
</dbReference>
<dbReference type="PANTHER" id="PTHR31689">
    <property type="entry name" value="DIAMINOPIMELATE EPIMERASE, CHLOROPLASTIC"/>
    <property type="match status" value="1"/>
</dbReference>
<dbReference type="Pfam" id="PF01678">
    <property type="entry name" value="DAP_epimerase"/>
    <property type="match status" value="2"/>
</dbReference>
<dbReference type="SUPFAM" id="SSF54506">
    <property type="entry name" value="Diaminopimelate epimerase-like"/>
    <property type="match status" value="1"/>
</dbReference>
<dbReference type="PROSITE" id="PS01326">
    <property type="entry name" value="DAP_EPIMERASE"/>
    <property type="match status" value="1"/>
</dbReference>
<evidence type="ECO:0000255" key="1">
    <source>
        <dbReference type="HAMAP-Rule" id="MF_00197"/>
    </source>
</evidence>
<sequence length="274" mass="30337">MQFSKMHGLGNDFMVVDAVTQNVFFSPELIRRLSDRHLGVGFDQLLVVEPPYDPELDFHYRIFNADGSEVSQCGNGARCFARFVRLKGLTNKRDIRVSTANGRMVLSVTEDELVRVNMGEPNFEPAQVPFRANKAEKTYIMRAAEQTILCGVVSMGNPHCVIQVDNVDTAAVETLGPVLESHERFPERANIGFMQVVRREHIRLRVYERGAGETRACGSGACAAVAVGIQQGLLAEEVRVELPGGRLDIAWKGPGHPLYMTGPAAHIYDGFIHL</sequence>
<feature type="chain" id="PRO_1000099264" description="Diaminopimelate epimerase">
    <location>
        <begin position="1"/>
        <end position="274"/>
    </location>
</feature>
<feature type="active site" description="Proton donor" evidence="1">
    <location>
        <position position="73"/>
    </location>
</feature>
<feature type="active site" description="Proton acceptor" evidence="1">
    <location>
        <position position="217"/>
    </location>
</feature>
<feature type="binding site" evidence="1">
    <location>
        <position position="11"/>
    </location>
    <ligand>
        <name>substrate</name>
    </ligand>
</feature>
<feature type="binding site" evidence="1">
    <location>
        <position position="44"/>
    </location>
    <ligand>
        <name>substrate</name>
    </ligand>
</feature>
<feature type="binding site" evidence="1">
    <location>
        <position position="64"/>
    </location>
    <ligand>
        <name>substrate</name>
    </ligand>
</feature>
<feature type="binding site" evidence="1">
    <location>
        <begin position="74"/>
        <end position="75"/>
    </location>
    <ligand>
        <name>substrate</name>
    </ligand>
</feature>
<feature type="binding site" evidence="1">
    <location>
        <position position="157"/>
    </location>
    <ligand>
        <name>substrate</name>
    </ligand>
</feature>
<feature type="binding site" evidence="1">
    <location>
        <position position="190"/>
    </location>
    <ligand>
        <name>substrate</name>
    </ligand>
</feature>
<feature type="binding site" evidence="1">
    <location>
        <begin position="208"/>
        <end position="209"/>
    </location>
    <ligand>
        <name>substrate</name>
    </ligand>
</feature>
<feature type="binding site" evidence="1">
    <location>
        <begin position="218"/>
        <end position="219"/>
    </location>
    <ligand>
        <name>substrate</name>
    </ligand>
</feature>
<feature type="site" description="Could be important to modulate the pK values of the two catalytic cysteine residues" evidence="1">
    <location>
        <position position="159"/>
    </location>
</feature>
<feature type="site" description="Could be important to modulate the pK values of the two catalytic cysteine residues" evidence="1">
    <location>
        <position position="208"/>
    </location>
</feature>
<feature type="site" description="Important for dimerization" evidence="1">
    <location>
        <position position="268"/>
    </location>
</feature>